<proteinExistence type="inferred from homology"/>
<keyword id="KW-0560">Oxidoreductase</keyword>
<keyword id="KW-1185">Reference proteome</keyword>
<keyword id="KW-0819">tRNA processing</keyword>
<name>TRHO_BURMA</name>
<protein>
    <recommendedName>
        <fullName evidence="1">tRNA uridine(34) hydroxylase</fullName>
        <ecNumber evidence="1">1.14.-.-</ecNumber>
    </recommendedName>
    <alternativeName>
        <fullName evidence="1">tRNA hydroxylation protein O</fullName>
    </alternativeName>
</protein>
<sequence>MTTVNLAAYRFVSLDSIEQWRPLVAARCNTLGLRGTILLAPEGINLFIAGPREATDAFVDYIRHDPLFEGKFADLPFKESLSDSQPFRRMLVRLKREIITMKKPAIKPELGRAPSVDARTLKAWLDQGHDDAGRPVVMLDTRNAFEVDVGTFDRALDYRIDKFSEFPAVIEANRADLEGKTIVSFCTGGIRCEKAAIHMKDVGIENVYQLEGGILKYFEEVGGAHYHGDCFVFDYRTALNPQLAPTADVTCFACRAVVPADAQQSPLYVPGKCCPACHPGDSGTPGRRAEPGAEPARAV</sequence>
<dbReference type="EC" id="1.14.-.-" evidence="1"/>
<dbReference type="EMBL" id="CP000010">
    <property type="protein sequence ID" value="AAU49503.1"/>
    <property type="molecule type" value="Genomic_DNA"/>
</dbReference>
<dbReference type="RefSeq" id="WP_004185449.1">
    <property type="nucleotide sequence ID" value="NC_006348.1"/>
</dbReference>
<dbReference type="RefSeq" id="YP_103509.1">
    <property type="nucleotide sequence ID" value="NC_006348.1"/>
</dbReference>
<dbReference type="SMR" id="Q62IG1"/>
<dbReference type="KEGG" id="bma:BMA1914"/>
<dbReference type="PATRIC" id="fig|243160.12.peg.1959"/>
<dbReference type="eggNOG" id="COG1054">
    <property type="taxonomic scope" value="Bacteria"/>
</dbReference>
<dbReference type="HOGENOM" id="CLU_038878_0_1_4"/>
<dbReference type="Proteomes" id="UP000006693">
    <property type="component" value="Chromosome 1"/>
</dbReference>
<dbReference type="GO" id="GO:0016705">
    <property type="term" value="F:oxidoreductase activity, acting on paired donors, with incorporation or reduction of molecular oxygen"/>
    <property type="evidence" value="ECO:0007669"/>
    <property type="project" value="UniProtKB-UniRule"/>
</dbReference>
<dbReference type="GO" id="GO:0006400">
    <property type="term" value="P:tRNA modification"/>
    <property type="evidence" value="ECO:0007669"/>
    <property type="project" value="UniProtKB-UniRule"/>
</dbReference>
<dbReference type="CDD" id="cd01518">
    <property type="entry name" value="RHOD_YceA"/>
    <property type="match status" value="1"/>
</dbReference>
<dbReference type="Gene3D" id="3.30.70.100">
    <property type="match status" value="1"/>
</dbReference>
<dbReference type="Gene3D" id="3.40.250.10">
    <property type="entry name" value="Rhodanese-like domain"/>
    <property type="match status" value="1"/>
</dbReference>
<dbReference type="HAMAP" id="MF_00469">
    <property type="entry name" value="TrhO"/>
    <property type="match status" value="1"/>
</dbReference>
<dbReference type="InterPro" id="IPR001763">
    <property type="entry name" value="Rhodanese-like_dom"/>
</dbReference>
<dbReference type="InterPro" id="IPR036873">
    <property type="entry name" value="Rhodanese-like_dom_sf"/>
</dbReference>
<dbReference type="InterPro" id="IPR020936">
    <property type="entry name" value="TrhO"/>
</dbReference>
<dbReference type="InterPro" id="IPR040503">
    <property type="entry name" value="TRHO_N"/>
</dbReference>
<dbReference type="NCBIfam" id="NF003703">
    <property type="entry name" value="PRK05320.1"/>
    <property type="match status" value="1"/>
</dbReference>
<dbReference type="PANTHER" id="PTHR43268:SF3">
    <property type="entry name" value="RHODANESE-LIKE DOMAIN-CONTAINING PROTEIN 7-RELATED"/>
    <property type="match status" value="1"/>
</dbReference>
<dbReference type="PANTHER" id="PTHR43268">
    <property type="entry name" value="THIOSULFATE SULFURTRANSFERASE/RHODANESE-LIKE DOMAIN-CONTAINING PROTEIN 2"/>
    <property type="match status" value="1"/>
</dbReference>
<dbReference type="Pfam" id="PF00581">
    <property type="entry name" value="Rhodanese"/>
    <property type="match status" value="1"/>
</dbReference>
<dbReference type="Pfam" id="PF17773">
    <property type="entry name" value="UPF0176_N"/>
    <property type="match status" value="1"/>
</dbReference>
<dbReference type="SMART" id="SM00450">
    <property type="entry name" value="RHOD"/>
    <property type="match status" value="1"/>
</dbReference>
<dbReference type="SUPFAM" id="SSF52821">
    <property type="entry name" value="Rhodanese/Cell cycle control phosphatase"/>
    <property type="match status" value="1"/>
</dbReference>
<dbReference type="PROSITE" id="PS50206">
    <property type="entry name" value="RHODANESE_3"/>
    <property type="match status" value="1"/>
</dbReference>
<organism>
    <name type="scientific">Burkholderia mallei (strain ATCC 23344)</name>
    <dbReference type="NCBI Taxonomy" id="243160"/>
    <lineage>
        <taxon>Bacteria</taxon>
        <taxon>Pseudomonadati</taxon>
        <taxon>Pseudomonadota</taxon>
        <taxon>Betaproteobacteria</taxon>
        <taxon>Burkholderiales</taxon>
        <taxon>Burkholderiaceae</taxon>
        <taxon>Burkholderia</taxon>
        <taxon>pseudomallei group</taxon>
    </lineage>
</organism>
<accession>Q62IG1</accession>
<gene>
    <name evidence="1" type="primary">trhO</name>
    <name type="ordered locus">BMA1914</name>
</gene>
<reference key="1">
    <citation type="journal article" date="2004" name="Proc. Natl. Acad. Sci. U.S.A.">
        <title>Structural flexibility in the Burkholderia mallei genome.</title>
        <authorList>
            <person name="Nierman W.C."/>
            <person name="DeShazer D."/>
            <person name="Kim H.S."/>
            <person name="Tettelin H."/>
            <person name="Nelson K.E."/>
            <person name="Feldblyum T.V."/>
            <person name="Ulrich R.L."/>
            <person name="Ronning C.M."/>
            <person name="Brinkac L.M."/>
            <person name="Daugherty S.C."/>
            <person name="Davidsen T.D."/>
            <person name="DeBoy R.T."/>
            <person name="Dimitrov G."/>
            <person name="Dodson R.J."/>
            <person name="Durkin A.S."/>
            <person name="Gwinn M.L."/>
            <person name="Haft D.H."/>
            <person name="Khouri H.M."/>
            <person name="Kolonay J.F."/>
            <person name="Madupu R."/>
            <person name="Mohammoud Y."/>
            <person name="Nelson W.C."/>
            <person name="Radune D."/>
            <person name="Romero C.M."/>
            <person name="Sarria S."/>
            <person name="Selengut J."/>
            <person name="Shamblin C."/>
            <person name="Sullivan S.A."/>
            <person name="White O."/>
            <person name="Yu Y."/>
            <person name="Zafar N."/>
            <person name="Zhou L."/>
            <person name="Fraser C.M."/>
        </authorList>
    </citation>
    <scope>NUCLEOTIDE SEQUENCE [LARGE SCALE GENOMIC DNA]</scope>
    <source>
        <strain>ATCC 23344</strain>
    </source>
</reference>
<feature type="chain" id="PRO_0000161458" description="tRNA uridine(34) hydroxylase">
    <location>
        <begin position="1"/>
        <end position="299"/>
    </location>
</feature>
<feature type="domain" description="Rhodanese" evidence="1">
    <location>
        <begin position="132"/>
        <end position="226"/>
    </location>
</feature>
<feature type="active site" description="Cysteine persulfide intermediate" evidence="1">
    <location>
        <position position="186"/>
    </location>
</feature>
<comment type="function">
    <text evidence="1">Catalyzes oxygen-dependent 5-hydroxyuridine (ho5U) modification at position 34 in tRNAs.</text>
</comment>
<comment type="catalytic activity">
    <reaction evidence="1">
        <text>uridine(34) in tRNA + AH2 + O2 = 5-hydroxyuridine(34) in tRNA + A + H2O</text>
        <dbReference type="Rhea" id="RHEA:64224"/>
        <dbReference type="Rhea" id="RHEA-COMP:11727"/>
        <dbReference type="Rhea" id="RHEA-COMP:13381"/>
        <dbReference type="ChEBI" id="CHEBI:13193"/>
        <dbReference type="ChEBI" id="CHEBI:15377"/>
        <dbReference type="ChEBI" id="CHEBI:15379"/>
        <dbReference type="ChEBI" id="CHEBI:17499"/>
        <dbReference type="ChEBI" id="CHEBI:65315"/>
        <dbReference type="ChEBI" id="CHEBI:136877"/>
    </reaction>
</comment>
<comment type="similarity">
    <text evidence="1">Belongs to the TrhO family.</text>
</comment>
<evidence type="ECO:0000255" key="1">
    <source>
        <dbReference type="HAMAP-Rule" id="MF_00469"/>
    </source>
</evidence>